<protein>
    <recommendedName>
        <fullName>Diacylglycerol acyltransferase/mycolyltransferase Ag85B</fullName>
        <shortName>DGAT</shortName>
        <ecNumber>2.3.1.122</ecNumber>
        <ecNumber>2.3.1.20</ecNumber>
    </recommendedName>
    <alternativeName>
        <fullName>30 kDa extracellular protein</fullName>
    </alternativeName>
    <alternativeName>
        <fullName>Acyl-CoA:diacylglycerol acyltransferase</fullName>
    </alternativeName>
    <alternativeName>
        <fullName>Antigen 85 complex B</fullName>
        <shortName>85B</shortName>
        <shortName>Ag85B</shortName>
    </alternativeName>
    <alternativeName>
        <fullName>Extracellular alpha-antigen</fullName>
    </alternativeName>
    <alternativeName>
        <fullName>Fibronectin-binding protein B</fullName>
        <shortName>Fbps B</shortName>
    </alternativeName>
</protein>
<proteinExistence type="inferred from homology"/>
<accession>A1KJU9</accession>
<accession>P12942</accession>
<comment type="function">
    <text evidence="1">The antigen 85 proteins (FbpA, FbpB, FbpC) are responsible for the high affinity of mycobacteria for fibronectin, a large adhesive glycoprotein, which facilitates the attachment of Mycobacteria to murine alveolar macrophages (AMs). They also help to maintain the integrity of the cell wall by catalyzing the transfer of mycolic acids to cell wall arabinogalactan and through the synthesis of alpha,alpha-trehalose dimycolate (TDM, cord factor). They catalyze the transfer of a mycoloyl residue from one molecule of alpha,alpha-trehalose monomycolate (TMM) to another TMM, leading to the formation of TDM (By similarity).</text>
</comment>
<comment type="catalytic activity">
    <reaction>
        <text>2 alpha,alpha'-trehalose 6-mycolate = alpha,alpha'-trehalose 6,6'-bismycolate + alpha,alpha-trehalose</text>
        <dbReference type="Rhea" id="RHEA:23472"/>
        <dbReference type="ChEBI" id="CHEBI:16551"/>
        <dbReference type="ChEBI" id="CHEBI:18195"/>
        <dbReference type="ChEBI" id="CHEBI:18234"/>
        <dbReference type="EC" id="2.3.1.122"/>
    </reaction>
</comment>
<comment type="catalytic activity">
    <reaction>
        <text>an acyl-CoA + a 1,2-diacyl-sn-glycerol = a triacyl-sn-glycerol + CoA</text>
        <dbReference type="Rhea" id="RHEA:10868"/>
        <dbReference type="ChEBI" id="CHEBI:17815"/>
        <dbReference type="ChEBI" id="CHEBI:57287"/>
        <dbReference type="ChEBI" id="CHEBI:58342"/>
        <dbReference type="ChEBI" id="CHEBI:64615"/>
        <dbReference type="EC" id="2.3.1.20"/>
    </reaction>
</comment>
<comment type="subcellular location">
    <subcellularLocation>
        <location evidence="1">Secreted</location>
    </subcellularLocation>
</comment>
<comment type="similarity">
    <text evidence="2">Belongs to the mycobacterial A85 antigen family.</text>
</comment>
<organism>
    <name type="scientific">Mycobacterium bovis (strain BCG / Pasteur 1173P2)</name>
    <dbReference type="NCBI Taxonomy" id="410289"/>
    <lineage>
        <taxon>Bacteria</taxon>
        <taxon>Bacillati</taxon>
        <taxon>Actinomycetota</taxon>
        <taxon>Actinomycetes</taxon>
        <taxon>Mycobacteriales</taxon>
        <taxon>Mycobacteriaceae</taxon>
        <taxon>Mycobacterium</taxon>
        <taxon>Mycobacterium tuberculosis complex</taxon>
    </lineage>
</organism>
<feature type="signal peptide" evidence="1">
    <location>
        <begin position="1"/>
        <end position="40"/>
    </location>
</feature>
<feature type="chain" id="PRO_0000285178" description="Diacylglycerol acyltransferase/mycolyltransferase Ag85B">
    <location>
        <begin position="41"/>
        <end position="325"/>
    </location>
</feature>
<feature type="region of interest" description="Fibronectin-binding">
    <location>
        <begin position="98"/>
        <end position="108"/>
    </location>
</feature>
<feature type="active site" description="Nucleophile" evidence="1">
    <location>
        <position position="166"/>
    </location>
</feature>
<feature type="active site" evidence="1">
    <location>
        <position position="270"/>
    </location>
</feature>
<feature type="active site" evidence="1">
    <location>
        <position position="302"/>
    </location>
</feature>
<feature type="binding site" evidence="1">
    <location>
        <begin position="82"/>
        <end position="83"/>
    </location>
    <ligand>
        <name>substrate</name>
    </ligand>
</feature>
<feature type="binding site" evidence="1">
    <location>
        <position position="166"/>
    </location>
    <ligand>
        <name>substrate</name>
    </ligand>
</feature>
<feature type="binding site" evidence="1">
    <location>
        <position position="194"/>
    </location>
    <ligand>
        <name>substrate</name>
    </ligand>
</feature>
<feature type="binding site" evidence="1">
    <location>
        <begin position="272"/>
        <end position="275"/>
    </location>
    <ligand>
        <name>substrate</name>
    </ligand>
</feature>
<feature type="binding site" evidence="1">
    <location>
        <position position="279"/>
    </location>
    <ligand>
        <name>substrate</name>
    </ligand>
</feature>
<feature type="binding site" evidence="1">
    <location>
        <begin position="302"/>
        <end position="304"/>
    </location>
    <ligand>
        <name>substrate</name>
    </ligand>
</feature>
<feature type="disulfide bond" evidence="1">
    <location>
        <begin position="127"/>
        <end position="132"/>
    </location>
</feature>
<sequence>MTDVSRKIRAWGRRLMIGTAAAVVLPGLVGLAGGAATAGAFSRPGLPVEYLQVPSPSMGRDIKVQFQSGGNNSPAVYLLDGLRAQDDYNGWDINTPAFEWYYQSGLSIVMPVGGQSSFYSDWYSPACGKAGCQTYKWETLLTSELPQWLSANRAVKPTGSAAIGLSMAGSSAMILAAYHPQQFIYAGSLSALLDPSQGMGPSLIGLAMGDAGGYKAADMWGPSSDPAWERNDPTQQIPKLVANNTRLWVYCGNGTPNELGGANIPAEFLENFVRSSNLKFQDAYNAAGGHNAVFNFPPNGTHSWEYWGAQLNAMKGDLQSSLGAG</sequence>
<name>A85B_MYCBP</name>
<dbReference type="EC" id="2.3.1.122"/>
<dbReference type="EC" id="2.3.1.20"/>
<dbReference type="EMBL" id="X62397">
    <property type="protein sequence ID" value="CAA44268.1"/>
    <property type="molecule type" value="Genomic_DNA"/>
</dbReference>
<dbReference type="EMBL" id="AM408590">
    <property type="protein sequence ID" value="CAL71910.1"/>
    <property type="molecule type" value="Genomic_DNA"/>
</dbReference>
<dbReference type="PIR" id="S29663">
    <property type="entry name" value="S29663"/>
</dbReference>
<dbReference type="RefSeq" id="WP_011799226.1">
    <property type="nucleotide sequence ID" value="NC_008769.1"/>
</dbReference>
<dbReference type="SMR" id="A1KJU9"/>
<dbReference type="ESTHER" id="myctu-a85b">
    <property type="family name" value="A85-Mycolyl-transferase"/>
</dbReference>
<dbReference type="KEGG" id="mbb:BCG_1923c"/>
<dbReference type="HOGENOM" id="CLU_026624_3_1_11"/>
<dbReference type="Proteomes" id="UP000001472">
    <property type="component" value="Chromosome"/>
</dbReference>
<dbReference type="GO" id="GO:0005576">
    <property type="term" value="C:extracellular region"/>
    <property type="evidence" value="ECO:0007669"/>
    <property type="project" value="UniProtKB-SubCell"/>
</dbReference>
<dbReference type="GO" id="GO:0004144">
    <property type="term" value="F:diacylglycerol O-acyltransferase activity"/>
    <property type="evidence" value="ECO:0007669"/>
    <property type="project" value="UniProtKB-EC"/>
</dbReference>
<dbReference type="GO" id="GO:0050348">
    <property type="term" value="F:trehalose O-mycolyltransferase activity"/>
    <property type="evidence" value="ECO:0007669"/>
    <property type="project" value="UniProtKB-EC"/>
</dbReference>
<dbReference type="FunFam" id="3.40.50.1820:FF:000086">
    <property type="entry name" value="Diacylglycerol acyltransferase/mycolyltransferase Ag85C"/>
    <property type="match status" value="1"/>
</dbReference>
<dbReference type="Gene3D" id="3.40.50.1820">
    <property type="entry name" value="alpha/beta hydrolase"/>
    <property type="match status" value="1"/>
</dbReference>
<dbReference type="InterPro" id="IPR029058">
    <property type="entry name" value="AB_hydrolase_fold"/>
</dbReference>
<dbReference type="InterPro" id="IPR000801">
    <property type="entry name" value="Esterase-like"/>
</dbReference>
<dbReference type="InterPro" id="IPR050583">
    <property type="entry name" value="Mycobacterial_A85_antigen"/>
</dbReference>
<dbReference type="PANTHER" id="PTHR48098:SF1">
    <property type="entry name" value="DIACYLGLYCEROL ACYLTRANSFERASE_MYCOLYLTRANSFERASE AG85A"/>
    <property type="match status" value="1"/>
</dbReference>
<dbReference type="PANTHER" id="PTHR48098">
    <property type="entry name" value="ENTEROCHELIN ESTERASE-RELATED"/>
    <property type="match status" value="1"/>
</dbReference>
<dbReference type="Pfam" id="PF00756">
    <property type="entry name" value="Esterase"/>
    <property type="match status" value="1"/>
</dbReference>
<dbReference type="SUPFAM" id="SSF53474">
    <property type="entry name" value="alpha/beta-Hydrolases"/>
    <property type="match status" value="1"/>
</dbReference>
<evidence type="ECO:0000250" key="1"/>
<evidence type="ECO:0000305" key="2"/>
<gene>
    <name type="primary">fbpB</name>
    <name type="ordered locus">BCG_1923c</name>
</gene>
<reference key="1">
    <citation type="journal article" date="1994" name="DNA Seq.">
        <title>Nucleotide sequence of the 85B-protein gene of Mycobacterium bovis BCG and Mycobacterium tuberculosis.</title>
        <authorList>
            <person name="de Wit L."/>
            <person name="Palou M."/>
            <person name="Content J."/>
        </authorList>
    </citation>
    <scope>NUCLEOTIDE SEQUENCE [GENOMIC DNA]</scope>
    <source>
        <strain>BCG / Pasteur 1173P2</strain>
    </source>
</reference>
<reference key="2">
    <citation type="journal article" date="2007" name="Proc. Natl. Acad. Sci. U.S.A.">
        <title>Genome plasticity of BCG and impact on vaccine efficacy.</title>
        <authorList>
            <person name="Brosch R."/>
            <person name="Gordon S.V."/>
            <person name="Garnier T."/>
            <person name="Eiglmeier K."/>
            <person name="Frigui W."/>
            <person name="Valenti P."/>
            <person name="Dos Santos S."/>
            <person name="Duthoy S."/>
            <person name="Lacroix C."/>
            <person name="Garcia-Pelayo C."/>
            <person name="Inwald J.K."/>
            <person name="Golby P."/>
            <person name="Garcia J.N."/>
            <person name="Hewinson R.G."/>
            <person name="Behr M.A."/>
            <person name="Quail M.A."/>
            <person name="Churcher C."/>
            <person name="Barrell B.G."/>
            <person name="Parkhill J."/>
            <person name="Cole S.T."/>
        </authorList>
    </citation>
    <scope>NUCLEOTIDE SEQUENCE [LARGE SCALE GENOMIC DNA]</scope>
    <source>
        <strain>BCG / Pasteur 1173P2</strain>
    </source>
</reference>
<keyword id="KW-0012">Acyltransferase</keyword>
<keyword id="KW-1015">Disulfide bond</keyword>
<keyword id="KW-0964">Secreted</keyword>
<keyword id="KW-0732">Signal</keyword>
<keyword id="KW-0808">Transferase</keyword>